<name>MSRQ_SHISS</name>
<comment type="function">
    <text evidence="1">Part of the MsrPQ system that repairs oxidized periplasmic proteins containing methionine sulfoxide residues (Met-O), using respiratory chain electrons. Thus protects these proteins from oxidative-stress damage caused by reactive species of oxygen and chlorine generated by the host defense mechanisms. MsrPQ is essential for the maintenance of envelope integrity under bleach stress, rescuing a wide series of structurally unrelated periplasmic proteins from methionine oxidation, including the primary periplasmic chaperone SurA and the lipoprotein Pal. MsrQ provides electrons for reduction to the reductase catalytic subunit MsrP, using the quinone pool of the respiratory chain.</text>
</comment>
<comment type="cofactor">
    <cofactor evidence="1">
        <name>FMN</name>
        <dbReference type="ChEBI" id="CHEBI:58210"/>
    </cofactor>
    <text evidence="1">Binds 1 FMN per subunit.</text>
</comment>
<comment type="cofactor">
    <cofactor evidence="1">
        <name>heme b</name>
        <dbReference type="ChEBI" id="CHEBI:60344"/>
    </cofactor>
    <text evidence="1">Binds 1 heme b (iron(II)-protoporphyrin IX) group per subunit.</text>
</comment>
<comment type="subunit">
    <text evidence="1">Heterodimer of a catalytic subunit (MsrP) and a heme-binding subunit (MsrQ).</text>
</comment>
<comment type="subcellular location">
    <subcellularLocation>
        <location evidence="1">Cell inner membrane</location>
        <topology evidence="1">Multi-pass membrane protein</topology>
    </subcellularLocation>
</comment>
<comment type="similarity">
    <text evidence="1">Belongs to the MsrQ family.</text>
</comment>
<feature type="chain" id="PRO_1000085536" description="Protein-methionine-sulfoxide reductase heme-binding subunit MsrQ">
    <location>
        <begin position="1"/>
        <end position="211"/>
    </location>
</feature>
<feature type="transmembrane region" description="Helical" evidence="1">
    <location>
        <begin position="17"/>
        <end position="37"/>
    </location>
</feature>
<feature type="transmembrane region" description="Helical" evidence="1">
    <location>
        <begin position="82"/>
        <end position="102"/>
    </location>
</feature>
<feature type="transmembrane region" description="Helical" evidence="1">
    <location>
        <begin position="116"/>
        <end position="136"/>
    </location>
</feature>
<feature type="transmembrane region" description="Helical" evidence="1">
    <location>
        <begin position="153"/>
        <end position="173"/>
    </location>
</feature>
<accession>Q3Z0L7</accession>
<keyword id="KW-0997">Cell inner membrane</keyword>
<keyword id="KW-1003">Cell membrane</keyword>
<keyword id="KW-0249">Electron transport</keyword>
<keyword id="KW-0285">Flavoprotein</keyword>
<keyword id="KW-0288">FMN</keyword>
<keyword id="KW-0349">Heme</keyword>
<keyword id="KW-0408">Iron</keyword>
<keyword id="KW-0472">Membrane</keyword>
<keyword id="KW-0479">Metal-binding</keyword>
<keyword id="KW-1185">Reference proteome</keyword>
<keyword id="KW-0812">Transmembrane</keyword>
<keyword id="KW-1133">Transmembrane helix</keyword>
<keyword id="KW-0813">Transport</keyword>
<protein>
    <recommendedName>
        <fullName evidence="1">Protein-methionine-sulfoxide reductase heme-binding subunit MsrQ</fullName>
    </recommendedName>
    <alternativeName>
        <fullName evidence="1">Flavocytochrome MsrQ</fullName>
    </alternativeName>
</protein>
<evidence type="ECO:0000255" key="1">
    <source>
        <dbReference type="HAMAP-Rule" id="MF_01207"/>
    </source>
</evidence>
<sequence length="211" mass="24066">MRLTAKQVTWLKVSLHLAGLLPFLWLVWAINHGGLGADPVKDIQHFTGRTALKFLLATLLITPLARYAKQPLLIRTRRLLGLWCFAWATLHLTSYALLELGVNNLALLGKELITRPYLTLGIISWVILLALAFTSTQAMQRKLGKHWQQLHNFVYLVAILAPIHYLWSVKIISPQPLIYAGLAVLLLALRYKKLRSLFKRLRKQVHNKLSV</sequence>
<organism>
    <name type="scientific">Shigella sonnei (strain Ss046)</name>
    <dbReference type="NCBI Taxonomy" id="300269"/>
    <lineage>
        <taxon>Bacteria</taxon>
        <taxon>Pseudomonadati</taxon>
        <taxon>Pseudomonadota</taxon>
        <taxon>Gammaproteobacteria</taxon>
        <taxon>Enterobacterales</taxon>
        <taxon>Enterobacteriaceae</taxon>
        <taxon>Shigella</taxon>
    </lineage>
</organism>
<reference key="1">
    <citation type="journal article" date="2005" name="Nucleic Acids Res.">
        <title>Genome dynamics and diversity of Shigella species, the etiologic agents of bacillary dysentery.</title>
        <authorList>
            <person name="Yang F."/>
            <person name="Yang J."/>
            <person name="Zhang X."/>
            <person name="Chen L."/>
            <person name="Jiang Y."/>
            <person name="Yan Y."/>
            <person name="Tang X."/>
            <person name="Wang J."/>
            <person name="Xiong Z."/>
            <person name="Dong J."/>
            <person name="Xue Y."/>
            <person name="Zhu Y."/>
            <person name="Xu X."/>
            <person name="Sun L."/>
            <person name="Chen S."/>
            <person name="Nie H."/>
            <person name="Peng J."/>
            <person name="Xu J."/>
            <person name="Wang Y."/>
            <person name="Yuan Z."/>
            <person name="Wen Y."/>
            <person name="Yao Z."/>
            <person name="Shen Y."/>
            <person name="Qiang B."/>
            <person name="Hou Y."/>
            <person name="Yu J."/>
            <person name="Jin Q."/>
        </authorList>
    </citation>
    <scope>NUCLEOTIDE SEQUENCE [LARGE SCALE GENOMIC DNA]</scope>
    <source>
        <strain>Ss046</strain>
    </source>
</reference>
<dbReference type="EMBL" id="CP000038">
    <property type="protein sequence ID" value="AAZ88695.1"/>
    <property type="molecule type" value="Genomic_DNA"/>
</dbReference>
<dbReference type="RefSeq" id="WP_001240104.1">
    <property type="nucleotide sequence ID" value="NC_007384.1"/>
</dbReference>
<dbReference type="SMR" id="Q3Z0L7"/>
<dbReference type="GeneID" id="93775214"/>
<dbReference type="KEGG" id="ssn:SSON_2031"/>
<dbReference type="HOGENOM" id="CLU_080662_1_0_6"/>
<dbReference type="Proteomes" id="UP000002529">
    <property type="component" value="Chromosome"/>
</dbReference>
<dbReference type="GO" id="GO:0005886">
    <property type="term" value="C:plasma membrane"/>
    <property type="evidence" value="ECO:0007669"/>
    <property type="project" value="UniProtKB-SubCell"/>
</dbReference>
<dbReference type="GO" id="GO:0009055">
    <property type="term" value="F:electron transfer activity"/>
    <property type="evidence" value="ECO:0007669"/>
    <property type="project" value="UniProtKB-UniRule"/>
</dbReference>
<dbReference type="GO" id="GO:0010181">
    <property type="term" value="F:FMN binding"/>
    <property type="evidence" value="ECO:0007669"/>
    <property type="project" value="UniProtKB-UniRule"/>
</dbReference>
<dbReference type="GO" id="GO:0020037">
    <property type="term" value="F:heme binding"/>
    <property type="evidence" value="ECO:0007669"/>
    <property type="project" value="UniProtKB-UniRule"/>
</dbReference>
<dbReference type="GO" id="GO:0046872">
    <property type="term" value="F:metal ion binding"/>
    <property type="evidence" value="ECO:0007669"/>
    <property type="project" value="UniProtKB-KW"/>
</dbReference>
<dbReference type="GO" id="GO:0016679">
    <property type="term" value="F:oxidoreductase activity, acting on diphenols and related substances as donors"/>
    <property type="evidence" value="ECO:0007669"/>
    <property type="project" value="TreeGrafter"/>
</dbReference>
<dbReference type="GO" id="GO:0030091">
    <property type="term" value="P:protein repair"/>
    <property type="evidence" value="ECO:0007669"/>
    <property type="project" value="UniProtKB-UniRule"/>
</dbReference>
<dbReference type="HAMAP" id="MF_01207">
    <property type="entry name" value="MsrQ"/>
    <property type="match status" value="1"/>
</dbReference>
<dbReference type="InterPro" id="IPR013130">
    <property type="entry name" value="Fe3_Rdtase_TM_dom"/>
</dbReference>
<dbReference type="InterPro" id="IPR022837">
    <property type="entry name" value="MsrQ-like"/>
</dbReference>
<dbReference type="NCBIfam" id="NF003830">
    <property type="entry name" value="PRK05419.1-1"/>
    <property type="match status" value="1"/>
</dbReference>
<dbReference type="NCBIfam" id="NF003831">
    <property type="entry name" value="PRK05419.1-2"/>
    <property type="match status" value="1"/>
</dbReference>
<dbReference type="NCBIfam" id="NF003832">
    <property type="entry name" value="PRK05419.1-4"/>
    <property type="match status" value="1"/>
</dbReference>
<dbReference type="PANTHER" id="PTHR36964">
    <property type="entry name" value="PROTEIN-METHIONINE-SULFOXIDE REDUCTASE HEME-BINDING SUBUNIT MSRQ"/>
    <property type="match status" value="1"/>
</dbReference>
<dbReference type="PANTHER" id="PTHR36964:SF1">
    <property type="entry name" value="PROTEIN-METHIONINE-SULFOXIDE REDUCTASE HEME-BINDING SUBUNIT MSRQ"/>
    <property type="match status" value="1"/>
</dbReference>
<dbReference type="Pfam" id="PF01794">
    <property type="entry name" value="Ferric_reduct"/>
    <property type="match status" value="1"/>
</dbReference>
<gene>
    <name evidence="1" type="primary">msrQ</name>
    <name type="ordered locus">SSON_2031</name>
</gene>
<proteinExistence type="inferred from homology"/>